<dbReference type="PIR" id="S06563">
    <property type="entry name" value="S06563"/>
</dbReference>
<dbReference type="SMR" id="P18712"/>
<dbReference type="Proteomes" id="UP000186698">
    <property type="component" value="Unplaced"/>
</dbReference>
<dbReference type="GO" id="GO:0005634">
    <property type="term" value="C:nucleus"/>
    <property type="evidence" value="ECO:0007669"/>
    <property type="project" value="UniProtKB-SubCell"/>
</dbReference>
<dbReference type="GO" id="GO:0000981">
    <property type="term" value="F:DNA-binding transcription factor activity, RNA polymerase II-specific"/>
    <property type="evidence" value="ECO:0000318"/>
    <property type="project" value="GO_Central"/>
</dbReference>
<dbReference type="GO" id="GO:0000978">
    <property type="term" value="F:RNA polymerase II cis-regulatory region sequence-specific DNA binding"/>
    <property type="evidence" value="ECO:0000318"/>
    <property type="project" value="GO_Central"/>
</dbReference>
<dbReference type="GO" id="GO:0008270">
    <property type="term" value="F:zinc ion binding"/>
    <property type="evidence" value="ECO:0007669"/>
    <property type="project" value="UniProtKB-KW"/>
</dbReference>
<dbReference type="GO" id="GO:0006357">
    <property type="term" value="P:regulation of transcription by RNA polymerase II"/>
    <property type="evidence" value="ECO:0000318"/>
    <property type="project" value="GO_Central"/>
</dbReference>
<dbReference type="FunFam" id="3.30.160.60:FF:001158">
    <property type="entry name" value="zinc finger protein 22"/>
    <property type="match status" value="1"/>
</dbReference>
<dbReference type="FunFam" id="3.30.160.60:FF:000352">
    <property type="entry name" value="zinc finger protein 3 homolog"/>
    <property type="match status" value="1"/>
</dbReference>
<dbReference type="FunFam" id="3.30.160.60:FF:000060">
    <property type="entry name" value="zinc finger protein 436"/>
    <property type="match status" value="1"/>
</dbReference>
<dbReference type="FunFam" id="3.30.160.60:FF:000710">
    <property type="entry name" value="Zinc finger protein 768"/>
    <property type="match status" value="1"/>
</dbReference>
<dbReference type="Gene3D" id="3.30.160.60">
    <property type="entry name" value="Classic Zinc Finger"/>
    <property type="match status" value="4"/>
</dbReference>
<dbReference type="InterPro" id="IPR036236">
    <property type="entry name" value="Znf_C2H2_sf"/>
</dbReference>
<dbReference type="InterPro" id="IPR013087">
    <property type="entry name" value="Znf_C2H2_type"/>
</dbReference>
<dbReference type="PANTHER" id="PTHR23226">
    <property type="entry name" value="ZINC FINGER AND SCAN DOMAIN-CONTAINING"/>
    <property type="match status" value="1"/>
</dbReference>
<dbReference type="PANTHER" id="PTHR23226:SF433">
    <property type="entry name" value="ZINC FINGER PROTEIN OZF-LIKE"/>
    <property type="match status" value="1"/>
</dbReference>
<dbReference type="Pfam" id="PF00096">
    <property type="entry name" value="zf-C2H2"/>
    <property type="match status" value="3"/>
</dbReference>
<dbReference type="SMART" id="SM00355">
    <property type="entry name" value="ZnF_C2H2"/>
    <property type="match status" value="4"/>
</dbReference>
<dbReference type="SUPFAM" id="SSF57667">
    <property type="entry name" value="beta-beta-alpha zinc fingers"/>
    <property type="match status" value="2"/>
</dbReference>
<dbReference type="PROSITE" id="PS00028">
    <property type="entry name" value="ZINC_FINGER_C2H2_1"/>
    <property type="match status" value="4"/>
</dbReference>
<dbReference type="PROSITE" id="PS50157">
    <property type="entry name" value="ZINC_FINGER_C2H2_2"/>
    <property type="match status" value="4"/>
</dbReference>
<organism>
    <name type="scientific">Xenopus laevis</name>
    <name type="common">African clawed frog</name>
    <dbReference type="NCBI Taxonomy" id="8355"/>
    <lineage>
        <taxon>Eukaryota</taxon>
        <taxon>Metazoa</taxon>
        <taxon>Chordata</taxon>
        <taxon>Craniata</taxon>
        <taxon>Vertebrata</taxon>
        <taxon>Euteleostomi</taxon>
        <taxon>Amphibia</taxon>
        <taxon>Batrachia</taxon>
        <taxon>Anura</taxon>
        <taxon>Pipoidea</taxon>
        <taxon>Pipidae</taxon>
        <taxon>Xenopodinae</taxon>
        <taxon>Xenopus</taxon>
        <taxon>Xenopus</taxon>
    </lineage>
</organism>
<reference key="1">
    <citation type="journal article" date="1989" name="J. Mol. Biol.">
        <title>Second-order repeats in Xenopus laevis finger proteins.</title>
        <authorList>
            <person name="Nietfeld W."/>
            <person name="El-Baradi T."/>
            <person name="Mentzel H."/>
            <person name="Pieler T."/>
            <person name="Koester M."/>
            <person name="Poeting A."/>
            <person name="Knoechel W."/>
        </authorList>
    </citation>
    <scope>NUCLEOTIDE SEQUENCE</scope>
</reference>
<accession>P18712</accession>
<sequence length="112" mass="12844">PNTVIYNCSECHKRFRSKSGFVKHQKTHTGETPFVCFVCEQRFVCHSALIGHQRIHTGEKPFSCTECGKCFSRRSHLNSHHKTHTGEKSFLCFACGKCFASRSHLTAHHRTH</sequence>
<name>ZG16_XENLA</name>
<evidence type="ECO:0000255" key="1">
    <source>
        <dbReference type="PROSITE-ProRule" id="PRU00042"/>
    </source>
</evidence>
<evidence type="ECO:0000305" key="2"/>
<keyword id="KW-0238">DNA-binding</keyword>
<keyword id="KW-0479">Metal-binding</keyword>
<keyword id="KW-0539">Nucleus</keyword>
<keyword id="KW-1185">Reference proteome</keyword>
<keyword id="KW-0677">Repeat</keyword>
<keyword id="KW-0804">Transcription</keyword>
<keyword id="KW-0805">Transcription regulation</keyword>
<keyword id="KW-0862">Zinc</keyword>
<keyword id="KW-0863">Zinc-finger</keyword>
<protein>
    <recommendedName>
        <fullName>Gastrula zinc finger protein XlCGF16.1</fullName>
    </recommendedName>
</protein>
<proteinExistence type="inferred from homology"/>
<comment type="function">
    <text>May be involved in transcriptional regulation.</text>
</comment>
<comment type="subcellular location">
    <subcellularLocation>
        <location evidence="2">Nucleus</location>
    </subcellularLocation>
</comment>
<comment type="similarity">
    <text evidence="2">Belongs to the krueppel C2H2-type zinc-finger protein family.</text>
</comment>
<feature type="chain" id="PRO_0000047786" description="Gastrula zinc finger protein XlCGF16.1">
    <location>
        <begin position="1" status="less than"/>
        <end position="112" status="greater than"/>
    </location>
</feature>
<feature type="zinc finger region" description="C2H2-type 1" evidence="1">
    <location>
        <begin position="6"/>
        <end position="28"/>
    </location>
</feature>
<feature type="zinc finger region" description="C2H2-type 2" evidence="1">
    <location>
        <begin position="34"/>
        <end position="56"/>
    </location>
</feature>
<feature type="zinc finger region" description="C2H2-type 3" evidence="1">
    <location>
        <begin position="62"/>
        <end position="84"/>
    </location>
</feature>
<feature type="zinc finger region" description="C2H2-type 4" evidence="1">
    <location>
        <begin position="90"/>
        <end position="112"/>
    </location>
</feature>
<feature type="non-terminal residue">
    <location>
        <position position="1"/>
    </location>
</feature>
<feature type="non-terminal residue">
    <location>
        <position position="112"/>
    </location>
</feature>